<keyword id="KW-0106">Calcium</keyword>
<keyword id="KW-0176">Collagen</keyword>
<keyword id="KW-1015">Disulfide bond</keyword>
<keyword id="KW-0272">Extracellular matrix</keyword>
<keyword id="KW-0325">Glycoprotein</keyword>
<keyword id="KW-0379">Hydroxylation</keyword>
<keyword id="KW-0479">Metal-binding</keyword>
<keyword id="KW-1185">Reference proteome</keyword>
<keyword id="KW-0677">Repeat</keyword>
<keyword id="KW-0964">Secreted</keyword>
<keyword id="KW-0732">Signal</keyword>
<accession>Q3U962</accession>
<accession>Q3TVR2</accession>
<accession>Q3UHK7</accession>
<accession>Q3UTT4</accession>
<accession>Q3V1J6</accession>
<accession>Q61431</accession>
<accession>Q7TMS0</accession>
<accession>Q80VS8</accession>
<feature type="signal peptide" evidence="3">
    <location>
        <begin position="1"/>
        <end position="26"/>
    </location>
</feature>
<feature type="chain" id="PRO_0000283768" description="Collagen alpha-2(V) chain" evidence="3">
    <location>
        <begin position="27"/>
        <end position="1227"/>
    </location>
</feature>
<feature type="propeptide" id="PRO_0000283769" description="C-terminal propeptide" evidence="3">
    <location>
        <begin position="1228"/>
        <end position="1497"/>
    </location>
</feature>
<feature type="domain" description="VWFC" evidence="4">
    <location>
        <begin position="38"/>
        <end position="96"/>
    </location>
</feature>
<feature type="domain" description="Fibrillar collagen NC1" evidence="5">
    <location>
        <begin position="1264"/>
        <end position="1497"/>
    </location>
</feature>
<feature type="region of interest" description="Disordered" evidence="6">
    <location>
        <begin position="103"/>
        <end position="1265"/>
    </location>
</feature>
<feature type="short sequence motif" description="Cell attachment site" evidence="3">
    <location>
        <begin position="141"/>
        <end position="143"/>
    </location>
</feature>
<feature type="short sequence motif" description="Cell attachment site" evidence="3">
    <location>
        <begin position="504"/>
        <end position="506"/>
    </location>
</feature>
<feature type="short sequence motif" description="Cell attachment site" evidence="3">
    <location>
        <begin position="942"/>
        <end position="944"/>
    </location>
</feature>
<feature type="short sequence motif" description="Cell attachment site" evidence="3">
    <location>
        <begin position="1065"/>
        <end position="1067"/>
    </location>
</feature>
<feature type="short sequence motif" description="Cell attachment site" evidence="3">
    <location>
        <begin position="1068"/>
        <end position="1070"/>
    </location>
</feature>
<feature type="short sequence motif" description="Cell attachment site" evidence="3">
    <location>
        <begin position="1125"/>
        <end position="1127"/>
    </location>
</feature>
<feature type="short sequence motif" description="Cell attachment site" evidence="3">
    <location>
        <begin position="1134"/>
        <end position="1136"/>
    </location>
</feature>
<feature type="compositionally biased region" description="Low complexity" evidence="6">
    <location>
        <begin position="155"/>
        <end position="164"/>
    </location>
</feature>
<feature type="compositionally biased region" description="Pro residues" evidence="6">
    <location>
        <begin position="168"/>
        <end position="180"/>
    </location>
</feature>
<feature type="compositionally biased region" description="Low complexity" evidence="6">
    <location>
        <begin position="210"/>
        <end position="225"/>
    </location>
</feature>
<feature type="compositionally biased region" description="Pro residues" evidence="6">
    <location>
        <begin position="234"/>
        <end position="246"/>
    </location>
</feature>
<feature type="compositionally biased region" description="Low complexity" evidence="6">
    <location>
        <begin position="320"/>
        <end position="338"/>
    </location>
</feature>
<feature type="compositionally biased region" description="Low complexity" evidence="6">
    <location>
        <begin position="425"/>
        <end position="441"/>
    </location>
</feature>
<feature type="compositionally biased region" description="Gly residues" evidence="6">
    <location>
        <begin position="550"/>
        <end position="559"/>
    </location>
</feature>
<feature type="compositionally biased region" description="Low complexity" evidence="6">
    <location>
        <begin position="602"/>
        <end position="611"/>
    </location>
</feature>
<feature type="compositionally biased region" description="Basic and acidic residues" evidence="6">
    <location>
        <begin position="708"/>
        <end position="719"/>
    </location>
</feature>
<feature type="compositionally biased region" description="Gly residues" evidence="6">
    <location>
        <begin position="730"/>
        <end position="739"/>
    </location>
</feature>
<feature type="compositionally biased region" description="Low complexity" evidence="6">
    <location>
        <begin position="744"/>
        <end position="756"/>
    </location>
</feature>
<feature type="compositionally biased region" description="Basic and acidic residues" evidence="6">
    <location>
        <begin position="774"/>
        <end position="785"/>
    </location>
</feature>
<feature type="compositionally biased region" description="Low complexity" evidence="6">
    <location>
        <begin position="824"/>
        <end position="839"/>
    </location>
</feature>
<feature type="compositionally biased region" description="Low complexity" evidence="6">
    <location>
        <begin position="878"/>
        <end position="891"/>
    </location>
</feature>
<feature type="compositionally biased region" description="Gly residues" evidence="6">
    <location>
        <begin position="892"/>
        <end position="901"/>
    </location>
</feature>
<feature type="compositionally biased region" description="Pro residues" evidence="6">
    <location>
        <begin position="917"/>
        <end position="927"/>
    </location>
</feature>
<feature type="compositionally biased region" description="Basic and acidic residues" evidence="6">
    <location>
        <begin position="1061"/>
        <end position="1070"/>
    </location>
</feature>
<feature type="compositionally biased region" description="Low complexity" evidence="6">
    <location>
        <begin position="1091"/>
        <end position="1112"/>
    </location>
</feature>
<feature type="compositionally biased region" description="Basic and acidic residues" evidence="6">
    <location>
        <begin position="1125"/>
        <end position="1139"/>
    </location>
</feature>
<feature type="compositionally biased region" description="Pro residues" evidence="6">
    <location>
        <begin position="1169"/>
        <end position="1179"/>
    </location>
</feature>
<feature type="compositionally biased region" description="Pro residues" evidence="6">
    <location>
        <begin position="1209"/>
        <end position="1224"/>
    </location>
</feature>
<feature type="binding site" evidence="1">
    <location>
        <position position="1312"/>
    </location>
    <ligand>
        <name>Ca(2+)</name>
        <dbReference type="ChEBI" id="CHEBI:29108"/>
    </ligand>
</feature>
<feature type="binding site" evidence="1">
    <location>
        <position position="1314"/>
    </location>
    <ligand>
        <name>Ca(2+)</name>
        <dbReference type="ChEBI" id="CHEBI:29108"/>
    </ligand>
</feature>
<feature type="binding site" evidence="1">
    <location>
        <position position="1315"/>
    </location>
    <ligand>
        <name>Ca(2+)</name>
        <dbReference type="ChEBI" id="CHEBI:29108"/>
    </ligand>
</feature>
<feature type="binding site" evidence="1">
    <location>
        <position position="1320"/>
    </location>
    <ligand>
        <name>Ca(2+)</name>
        <dbReference type="ChEBI" id="CHEBI:29108"/>
    </ligand>
</feature>
<feature type="modified residue" description="4-hydroxyproline" evidence="1">
    <location>
        <position position="288"/>
    </location>
</feature>
<feature type="modified residue" description="4-hydroxyproline" evidence="1">
    <location>
        <position position="291"/>
    </location>
</feature>
<feature type="modified residue" description="4-hydroxyproline" evidence="1">
    <location>
        <position position="294"/>
    </location>
</feature>
<feature type="modified residue" description="4-hydroxyproline" evidence="1">
    <location>
        <position position="609"/>
    </location>
</feature>
<feature type="modified residue" description="4-hydroxyproline" evidence="1">
    <location>
        <position position="615"/>
    </location>
</feature>
<feature type="glycosylation site" description="N-linked (GlcNAc...) asparagine" evidence="3">
    <location>
        <position position="1260"/>
    </location>
</feature>
<feature type="glycosylation site" description="N-linked (GlcNAc...) asparagine" evidence="3">
    <location>
        <position position="1398"/>
    </location>
</feature>
<feature type="disulfide bond" evidence="5">
    <location>
        <begin position="1294"/>
        <end position="1326"/>
    </location>
</feature>
<feature type="disulfide bond" evidence="5">
    <location>
        <begin position="1334"/>
        <end position="1495"/>
    </location>
</feature>
<feature type="disulfide bond" evidence="5">
    <location>
        <begin position="1403"/>
        <end position="1448"/>
    </location>
</feature>
<feature type="sequence conflict" description="In Ref. 2; BAE23896." evidence="11" ref="2">
    <original>Y</original>
    <variation>D</variation>
    <location>
        <position position="20"/>
    </location>
</feature>
<feature type="sequence conflict" description="In Ref. 1; AAA37440." evidence="11" ref="1">
    <original>T</original>
    <variation>P</variation>
    <location>
        <position position="88"/>
    </location>
</feature>
<feature type="sequence conflict" description="In Ref. 2; BAE27850." evidence="11" ref="2">
    <original>G</original>
    <variation>R</variation>
    <location>
        <position position="160"/>
    </location>
</feature>
<feature type="sequence conflict" description="In Ref. 1; AAA37440." evidence="11" ref="1">
    <original>V</original>
    <variation>M</variation>
    <location>
        <position position="164"/>
    </location>
</feature>
<feature type="sequence conflict" description="In Ref. 1; AAA37440." evidence="11" ref="1">
    <original>Q</original>
    <variation>V</variation>
    <location>
        <position position="222"/>
    </location>
</feature>
<feature type="sequence conflict" description="In Ref. 1; AAA37440." evidence="11" ref="1">
    <original>V</original>
    <variation>A</variation>
    <location>
        <position position="231"/>
    </location>
</feature>
<feature type="sequence conflict" description="In Ref. 1; AAA37440." evidence="11" ref="1">
    <original>A</original>
    <variation>R</variation>
    <location>
        <position position="387"/>
    </location>
</feature>
<feature type="sequence conflict" description="In Ref. 1; AAA37440." evidence="11" ref="1">
    <original>T</original>
    <variation>H</variation>
    <location>
        <position position="390"/>
    </location>
</feature>
<feature type="sequence conflict" description="In Ref. 1; AAA37440." evidence="11" ref="1">
    <original>A</original>
    <variation>R</variation>
    <location>
        <position position="428"/>
    </location>
</feature>
<feature type="sequence conflict" description="In Ref. 1; AAA37440." evidence="11" ref="1">
    <original>P</original>
    <variation>A</variation>
    <location>
        <position position="431"/>
    </location>
</feature>
<feature type="sequence conflict" description="In Ref. 1; AAA37440 and 3; AAH55077." evidence="11" ref="1 3">
    <original>L</original>
    <variation>V</variation>
    <location>
        <position position="614"/>
    </location>
</feature>
<feature type="sequence conflict" description="In Ref. 1; AAA37440." evidence="11" ref="1">
    <original>Q</original>
    <variation>A</variation>
    <location>
        <position position="666"/>
    </location>
</feature>
<feature type="sequence conflict" description="In Ref. 1; AAA37440." evidence="11" ref="1">
    <original>PTGEK</original>
    <variation>LLGAP</variation>
    <location>
        <begin position="809"/>
        <end position="813"/>
    </location>
</feature>
<feature type="sequence conflict" description="In Ref. 1; AAA37440." evidence="11" ref="1">
    <original>P</original>
    <variation>S</variation>
    <location>
        <position position="851"/>
    </location>
</feature>
<feature type="sequence conflict" description="In Ref. 1; AAA37440." evidence="11" ref="1">
    <original>ER</original>
    <variation>VT</variation>
    <location>
        <begin position="1001"/>
        <end position="1002"/>
    </location>
</feature>
<feature type="sequence conflict" description="In Ref. 3; AAH55077." evidence="11" ref="3">
    <original>T</original>
    <variation>A</variation>
    <location>
        <position position="1013"/>
    </location>
</feature>
<feature type="sequence conflict" description="In Ref. 2; BAE21154." evidence="11" ref="2">
    <original>G</original>
    <variation>V</variation>
    <location>
        <position position="1063"/>
    </location>
</feature>
<feature type="sequence conflict" description="In Ref. 1; AAA37440." evidence="11" ref="1">
    <original>P</original>
    <variation>S</variation>
    <location>
        <position position="1181"/>
    </location>
</feature>
<feature type="sequence conflict" description="In Ref. 3; AAH55077." evidence="11" ref="3">
    <original>A</original>
    <variation>T</variation>
    <location>
        <position position="1337"/>
    </location>
</feature>
<feature type="sequence conflict" description="In Ref. 1; AAA37440." evidence="11" ref="1">
    <original>L</original>
    <variation>F</variation>
    <location>
        <position position="1388"/>
    </location>
</feature>
<reference evidence="11 12" key="1">
    <citation type="journal article" date="1992" name="Dev. Dyn.">
        <title>Localization of pro-alpha 2(V) collagen transcripts in the tissues of the developing mouse embryo.</title>
        <authorList>
            <person name="Andrikopoulos K."/>
            <person name="Suzuki H.R."/>
            <person name="Solursh M."/>
            <person name="Ramirez F."/>
        </authorList>
    </citation>
    <scope>NUCLEOTIDE SEQUENCE [MRNA]</scope>
    <scope>FUNCTION</scope>
    <scope>DEVELOPMENTAL STAGE</scope>
    <source>
        <strain evidence="12">BALB/cJ</strain>
    </source>
</reference>
<reference evidence="19" key="2">
    <citation type="journal article" date="2005" name="Science">
        <title>The transcriptional landscape of the mammalian genome.</title>
        <authorList>
            <person name="Carninci P."/>
            <person name="Kasukawa T."/>
            <person name="Katayama S."/>
            <person name="Gough J."/>
            <person name="Frith M.C."/>
            <person name="Maeda N."/>
            <person name="Oyama R."/>
            <person name="Ravasi T."/>
            <person name="Lenhard B."/>
            <person name="Wells C."/>
            <person name="Kodzius R."/>
            <person name="Shimokawa K."/>
            <person name="Bajic V.B."/>
            <person name="Brenner S.E."/>
            <person name="Batalov S."/>
            <person name="Forrest A.R."/>
            <person name="Zavolan M."/>
            <person name="Davis M.J."/>
            <person name="Wilming L.G."/>
            <person name="Aidinis V."/>
            <person name="Allen J.E."/>
            <person name="Ambesi-Impiombato A."/>
            <person name="Apweiler R."/>
            <person name="Aturaliya R.N."/>
            <person name="Bailey T.L."/>
            <person name="Bansal M."/>
            <person name="Baxter L."/>
            <person name="Beisel K.W."/>
            <person name="Bersano T."/>
            <person name="Bono H."/>
            <person name="Chalk A.M."/>
            <person name="Chiu K.P."/>
            <person name="Choudhary V."/>
            <person name="Christoffels A."/>
            <person name="Clutterbuck D.R."/>
            <person name="Crowe M.L."/>
            <person name="Dalla E."/>
            <person name="Dalrymple B.P."/>
            <person name="de Bono B."/>
            <person name="Della Gatta G."/>
            <person name="di Bernardo D."/>
            <person name="Down T."/>
            <person name="Engstrom P."/>
            <person name="Fagiolini M."/>
            <person name="Faulkner G."/>
            <person name="Fletcher C.F."/>
            <person name="Fukushima T."/>
            <person name="Furuno M."/>
            <person name="Futaki S."/>
            <person name="Gariboldi M."/>
            <person name="Georgii-Hemming P."/>
            <person name="Gingeras T.R."/>
            <person name="Gojobori T."/>
            <person name="Green R.E."/>
            <person name="Gustincich S."/>
            <person name="Harbers M."/>
            <person name="Hayashi Y."/>
            <person name="Hensch T.K."/>
            <person name="Hirokawa N."/>
            <person name="Hill D."/>
            <person name="Huminiecki L."/>
            <person name="Iacono M."/>
            <person name="Ikeo K."/>
            <person name="Iwama A."/>
            <person name="Ishikawa T."/>
            <person name="Jakt M."/>
            <person name="Kanapin A."/>
            <person name="Katoh M."/>
            <person name="Kawasawa Y."/>
            <person name="Kelso J."/>
            <person name="Kitamura H."/>
            <person name="Kitano H."/>
            <person name="Kollias G."/>
            <person name="Krishnan S.P."/>
            <person name="Kruger A."/>
            <person name="Kummerfeld S.K."/>
            <person name="Kurochkin I.V."/>
            <person name="Lareau L.F."/>
            <person name="Lazarevic D."/>
            <person name="Lipovich L."/>
            <person name="Liu J."/>
            <person name="Liuni S."/>
            <person name="McWilliam S."/>
            <person name="Madan Babu M."/>
            <person name="Madera M."/>
            <person name="Marchionni L."/>
            <person name="Matsuda H."/>
            <person name="Matsuzawa S."/>
            <person name="Miki H."/>
            <person name="Mignone F."/>
            <person name="Miyake S."/>
            <person name="Morris K."/>
            <person name="Mottagui-Tabar S."/>
            <person name="Mulder N."/>
            <person name="Nakano N."/>
            <person name="Nakauchi H."/>
            <person name="Ng P."/>
            <person name="Nilsson R."/>
            <person name="Nishiguchi S."/>
            <person name="Nishikawa S."/>
            <person name="Nori F."/>
            <person name="Ohara O."/>
            <person name="Okazaki Y."/>
            <person name="Orlando V."/>
            <person name="Pang K.C."/>
            <person name="Pavan W.J."/>
            <person name="Pavesi G."/>
            <person name="Pesole G."/>
            <person name="Petrovsky N."/>
            <person name="Piazza S."/>
            <person name="Reed J."/>
            <person name="Reid J.F."/>
            <person name="Ring B.Z."/>
            <person name="Ringwald M."/>
            <person name="Rost B."/>
            <person name="Ruan Y."/>
            <person name="Salzberg S.L."/>
            <person name="Sandelin A."/>
            <person name="Schneider C."/>
            <person name="Schoenbach C."/>
            <person name="Sekiguchi K."/>
            <person name="Semple C.A."/>
            <person name="Seno S."/>
            <person name="Sessa L."/>
            <person name="Sheng Y."/>
            <person name="Shibata Y."/>
            <person name="Shimada H."/>
            <person name="Shimada K."/>
            <person name="Silva D."/>
            <person name="Sinclair B."/>
            <person name="Sperling S."/>
            <person name="Stupka E."/>
            <person name="Sugiura K."/>
            <person name="Sultana R."/>
            <person name="Takenaka Y."/>
            <person name="Taki K."/>
            <person name="Tammoja K."/>
            <person name="Tan S.L."/>
            <person name="Tang S."/>
            <person name="Taylor M.S."/>
            <person name="Tegner J."/>
            <person name="Teichmann S.A."/>
            <person name="Ueda H.R."/>
            <person name="van Nimwegen E."/>
            <person name="Verardo R."/>
            <person name="Wei C.L."/>
            <person name="Yagi K."/>
            <person name="Yamanishi H."/>
            <person name="Zabarovsky E."/>
            <person name="Zhu S."/>
            <person name="Zimmer A."/>
            <person name="Hide W."/>
            <person name="Bult C."/>
            <person name="Grimmond S.M."/>
            <person name="Teasdale R.D."/>
            <person name="Liu E.T."/>
            <person name="Brusic V."/>
            <person name="Quackenbush J."/>
            <person name="Wahlestedt C."/>
            <person name="Mattick J.S."/>
            <person name="Hume D.A."/>
            <person name="Kai C."/>
            <person name="Sasaki D."/>
            <person name="Tomaru Y."/>
            <person name="Fukuda S."/>
            <person name="Kanamori-Katayama M."/>
            <person name="Suzuki M."/>
            <person name="Aoki J."/>
            <person name="Arakawa T."/>
            <person name="Iida J."/>
            <person name="Imamura K."/>
            <person name="Itoh M."/>
            <person name="Kato T."/>
            <person name="Kawaji H."/>
            <person name="Kawagashira N."/>
            <person name="Kawashima T."/>
            <person name="Kojima M."/>
            <person name="Kondo S."/>
            <person name="Konno H."/>
            <person name="Nakano K."/>
            <person name="Ninomiya N."/>
            <person name="Nishio T."/>
            <person name="Okada M."/>
            <person name="Plessy C."/>
            <person name="Shibata K."/>
            <person name="Shiraki T."/>
            <person name="Suzuki S."/>
            <person name="Tagami M."/>
            <person name="Waki K."/>
            <person name="Watahiki A."/>
            <person name="Okamura-Oho Y."/>
            <person name="Suzuki H."/>
            <person name="Kawai J."/>
            <person name="Hayashizaki Y."/>
        </authorList>
    </citation>
    <scope>NUCLEOTIDE SEQUENCE [LARGE SCALE MRNA]</scope>
    <source>
        <strain evidence="19">C57BL/6J</strain>
        <tissue evidence="19">Bone marrow</tissue>
        <tissue evidence="16">Cerebellum</tissue>
        <tissue evidence="17">Embryo</tissue>
        <tissue evidence="18">Placenta</tissue>
        <tissue evidence="15">Skin</tissue>
    </source>
</reference>
<reference evidence="14" key="3">
    <citation type="journal article" date="2004" name="Genome Res.">
        <title>The status, quality, and expansion of the NIH full-length cDNA project: the Mammalian Gene Collection (MGC).</title>
        <authorList>
            <consortium name="The MGC Project Team"/>
        </authorList>
    </citation>
    <scope>NUCLEOTIDE SEQUENCE [LARGE SCALE MRNA]</scope>
    <source>
        <strain evidence="14">C3H/He</strain>
        <tissue evidence="13">Mammary gland</tissue>
        <tissue evidence="14">Mesenchymal stem cell</tissue>
    </source>
</reference>
<reference evidence="11" key="4">
    <citation type="journal article" date="1995" name="Nat. Genet.">
        <title>Targeted mutation in the col5a2 gene reveals a regulatory role for type V collagen during matrix assembly.</title>
        <authorList>
            <person name="Andrikopoulos K."/>
            <person name="Liu X."/>
            <person name="Keene D.R."/>
            <person name="Jaenisch R."/>
            <person name="Ramirez F."/>
        </authorList>
    </citation>
    <scope>FUNCTION</scope>
</reference>
<reference evidence="11" key="5">
    <citation type="journal article" date="1998" name="Mol. Med.">
        <title>Effect of targeted mutation in collagen V alpha 2 gene on development of cutaneous hyperplasia in tight skin mice.</title>
        <authorList>
            <person name="Phelps R.G."/>
            <person name="Murai C."/>
            <person name="Saito S."/>
            <person name="Hatakeyama A."/>
            <person name="Andrikopoulos K."/>
            <person name="Kasturi K.N."/>
            <person name="Bona C.A."/>
        </authorList>
    </citation>
    <scope>FUNCTION</scope>
</reference>
<reference evidence="11" key="6">
    <citation type="journal article" date="2004" name="Mol. Cell. Biol.">
        <title>Development of a functional skin matrix requires deposition of collagen V heterotrimers.</title>
        <authorList>
            <person name="Chanut-Delalande H."/>
            <person name="Bonod-Bidaud C."/>
            <person name="Cogne S."/>
            <person name="Malbouyres M."/>
            <person name="Ramirez F."/>
            <person name="Fichard A."/>
            <person name="Ruggiero F."/>
        </authorList>
    </citation>
    <scope>SUBUNIT</scope>
</reference>
<comment type="function">
    <text evidence="2 7 9 10">Type V collagen is a member of group I collagen (fibrillar forming collagen). It is a minor connective tissue component of nearly ubiquitous distribution. Type V collagen binds to DNA, heparan sulfate, thrombospondin, heparin, and insulin. Type V collagen is a key determinant in the assembly of tissue-specific matrices.</text>
</comment>
<comment type="subunit">
    <text evidence="2 8">Trimers of two alpha 1(V) and one alpha 2(V) chains expressed in most tissues and trimers of one alpha 1(V), one alpha 2(V), and one alpha 3(V) chains with a more limited distribution of expression.</text>
</comment>
<comment type="subcellular location">
    <subcellularLocation>
        <location evidence="5">Secreted</location>
        <location evidence="5">Extracellular space</location>
        <location evidence="5">Extracellular matrix</location>
    </subcellularLocation>
</comment>
<comment type="developmental stage">
    <text evidence="7">Expressed in embryos from 9 days of gestation onward. In 12.5 dpc embryos, low and diffuse level of expression was observed in the peritoneal membranes and intestinal and craniofacial mesenchymes. By 16.5 dpc, expression is higher and exhibits a more restricted accumulation in primary ossified regions, perichondrium, joints, tendon, atrioventricular valve of heart, and in selected portions of the head.</text>
</comment>
<comment type="domain">
    <text evidence="1">The C-terminal propeptide, also known as COLFI domain, have crucial roles in tissue growth and repair by controlling both the intracellular assembly of procollagen molecules and the extracellular assembly of collagen fibrils. It binds a calcium ion which is essential for its function (By similarity).</text>
</comment>
<comment type="PTM">
    <text>Prolines at the third position of the tripeptide repeating unit (G-X-P) are hydroxylated in some or all of the chains. Probably 3-hydroxylated on prolines by LEPREL1.</text>
</comment>
<comment type="PTM">
    <text evidence="1">Hydroxylation on proline residues within the sequence motif, GXPG, is most likely to be 4-hydroxy as this fits the requirement for 4-hydroxylation in vertebrates.</text>
</comment>
<comment type="miscellaneous">
    <text evidence="8 9 10">Mice homozygous for the targeted deletion of the N-terminal telopeptide segment of the COL5A2 chain show poor survival rates, possibly because of complications from spinal deformities, and exhibit skin and eye abnormalities caused by disorganized type I collagen fibrils.</text>
</comment>
<comment type="miscellaneous">
    <text evidence="8">The alpha 1(V)-alpha 1(V)-alpha 2(V) heterotrimer makes a critical contribution to fibrillogenesis, basement membrane organization, and cell viability, and may play a possible role in the development of a functional skin matrix.</text>
</comment>
<comment type="similarity">
    <text evidence="5">Belongs to the fibrillar collagen family.</text>
</comment>
<comment type="sequence caution" evidence="11">
    <conflict type="erroneous initiation">
        <sequence resource="EMBL-CDS" id="BAE23896"/>
    </conflict>
    <text>Truncated N-terminus.</text>
</comment>
<organism>
    <name type="scientific">Mus musculus</name>
    <name type="common">Mouse</name>
    <dbReference type="NCBI Taxonomy" id="10090"/>
    <lineage>
        <taxon>Eukaryota</taxon>
        <taxon>Metazoa</taxon>
        <taxon>Chordata</taxon>
        <taxon>Craniata</taxon>
        <taxon>Vertebrata</taxon>
        <taxon>Euteleostomi</taxon>
        <taxon>Mammalia</taxon>
        <taxon>Eutheria</taxon>
        <taxon>Euarchontoglires</taxon>
        <taxon>Glires</taxon>
        <taxon>Rodentia</taxon>
        <taxon>Myomorpha</taxon>
        <taxon>Muroidea</taxon>
        <taxon>Muridae</taxon>
        <taxon>Murinae</taxon>
        <taxon>Mus</taxon>
        <taxon>Mus</taxon>
    </lineage>
</organism>
<evidence type="ECO:0000250" key="1"/>
<evidence type="ECO:0000250" key="2">
    <source>
        <dbReference type="UniProtKB" id="P05997"/>
    </source>
</evidence>
<evidence type="ECO:0000255" key="3"/>
<evidence type="ECO:0000255" key="4">
    <source>
        <dbReference type="PROSITE-ProRule" id="PRU00220"/>
    </source>
</evidence>
<evidence type="ECO:0000255" key="5">
    <source>
        <dbReference type="PROSITE-ProRule" id="PRU00793"/>
    </source>
</evidence>
<evidence type="ECO:0000256" key="6">
    <source>
        <dbReference type="SAM" id="MobiDB-lite"/>
    </source>
</evidence>
<evidence type="ECO:0000269" key="7">
    <source>
    </source>
</evidence>
<evidence type="ECO:0000269" key="8">
    <source>
    </source>
</evidence>
<evidence type="ECO:0000269" key="9">
    <source>
    </source>
</evidence>
<evidence type="ECO:0000269" key="10">
    <source>
    </source>
</evidence>
<evidence type="ECO:0000305" key="11"/>
<evidence type="ECO:0000312" key="12">
    <source>
        <dbReference type="EMBL" id="AAA37440.1"/>
    </source>
</evidence>
<evidence type="ECO:0000312" key="13">
    <source>
        <dbReference type="EMBL" id="AAH43696.1"/>
    </source>
</evidence>
<evidence type="ECO:0000312" key="14">
    <source>
        <dbReference type="EMBL" id="AAH55077.1"/>
    </source>
</evidence>
<evidence type="ECO:0000312" key="15">
    <source>
        <dbReference type="EMBL" id="BAE21154.1"/>
    </source>
</evidence>
<evidence type="ECO:0000312" key="16">
    <source>
        <dbReference type="EMBL" id="BAE23896.1"/>
    </source>
</evidence>
<evidence type="ECO:0000312" key="17">
    <source>
        <dbReference type="EMBL" id="BAE27775.1"/>
    </source>
</evidence>
<evidence type="ECO:0000312" key="18">
    <source>
        <dbReference type="EMBL" id="BAE27850.1"/>
    </source>
</evidence>
<evidence type="ECO:0000312" key="19">
    <source>
        <dbReference type="EMBL" id="BAE30805.1"/>
    </source>
</evidence>
<evidence type="ECO:0000312" key="20">
    <source>
        <dbReference type="MGI" id="MGI:88458"/>
    </source>
</evidence>
<protein>
    <recommendedName>
        <fullName>Collagen alpha-2(V) chain</fullName>
    </recommendedName>
</protein>
<sequence length="1497" mass="145018">MMANWVGARPLLILSVLLGYCVSIKAQEQENDEYDEEIACTQHGQMYLNRDIWKPSPCQICVCDNGAILCDKIECPEVLNCANPITPTGECCPVCPQTGGGDTSFGRGRKGQKGEPGLVPVVTGIRGRPGPAGPPGSQGPRGDRGPKGRPGPRGPQGIDGEPGVPGQPGAPGPPGHPSHPGPDGMSRPFSAQMAGLDEKSGLGSQVGLMPGSVGPVGPRGPQGLQGQQGGVGPAGPPGEPGEPGPMGPIGSRGPEGPPGKPGEDGEPGRNGNTGEVGFSGSPGARGFPGAPGLPGLKGHRGHKGLEGPKGEIGAPGAKGEAGPTGPMGAMGPLGPRGMPGERGRLGPQGAPGKRGAHGMPGKPGPMGPLGIPGSSGFPGNPGMKGEAGPTGARGPEGPQGQRGETGPPGPAGSQGLPGAVGTDGTPGAKGPTGSAGTSGPPGLAGPPGSPGPQGSTGPQGIRGQSGDPGVPGFKGEAGPKGEPGPHGIQGPIGPPGEEGKRGPRGDPGTVGPPGPMGERGAPGNRGFPGSDGLPGPKGAQGERGPVGSSGPKGGQGDPGRPGEPGLPGARGLTGNPGVQGPEGKLGPLGAPGEDGRPGPPGSIGIRGQPGSMGLPGPKGSSGDLGKPGEAGNAGVPGQRGAPGKDGEVGPSGPVGPPGLAGERGEQGPPGPTGFQGLPGPPGPPGEGGKAGDQGVPGEPGAVGPLGPRGERGNPGERGEPGITGLPGEKGMAGGHGPDGPKGNPGPTGTIGDTGPPGLQGMPGERGIAGTPGPKGDRGGIGEKGAEGTAGNDGARGLPGPLGPPGPAGPTGEKGEPGPRGLVGPPGSRGNPGSRGENGPTGAVGFAGPQGPDGQPGVKGEPGEPGQKGDAGSPGPQGLAGSPGPHGPHGVPGLKGGRGTQGPPGATGFPGSAGRVGPPGPAGAPGPAGPAGEPGKEGPPGLRGDPGSHGRVGDRGPAGPPGSPGDKGDPGEDGQPGPDGPPGPAGTTGQRGIVGMPGQRGERGMPGLPGPAGTPGKVGPTGATGDKGPPGPVGPPGSNGPVGEPGPEGPAGNDGTPGRDGAVGERGDRGDPGPAGLPGSQGAPGTPGPVGAPGDAGQRGEPGSRGPVGPPGRAGKRGLPGPQGPRGDKGDNGDRGDRGQKGHRGFTGLQGLPGPPGPNGEQGSAGIPGPFGPRGPPGPVGPSGKEGNPGPLGPIGPPGVRGSVGEAGPEGPPGEPGPPGPPGPPGHLTAALGDIMGHYDENMPDPLPEFTEDQAAPDDTNKTDPGIHVTLKSLSSQIETMRSPDGSKKHPARTCDDLKLCHPTKQSGEYWIDPNQGSAEDAIKVYCNMETGETCISANPASVPRKTWWASKSPDNKPVWYGLDMNRGSQFTYGDYQSPNTAITQMTFLRLLSKEASQNLTYICRNTVGYMDDQAKNLKKAVVLKGSNDLEIKGEGNIRFRYTVLQDTCSKRNGNVGKTIFEYRTQNVARLPIIDVGPVDIGNADQEFGLDIGPVCFM</sequence>
<name>CO5A2_MOUSE</name>
<proteinExistence type="evidence at protein level"/>
<gene>
    <name evidence="20" type="primary">Col5a2</name>
</gene>
<dbReference type="EMBL" id="L02918">
    <property type="protein sequence ID" value="AAA37440.1"/>
    <property type="molecule type" value="mRNA"/>
</dbReference>
<dbReference type="EMBL" id="AK132413">
    <property type="protein sequence ID" value="BAE21154.1"/>
    <property type="molecule type" value="mRNA"/>
</dbReference>
<dbReference type="EMBL" id="AK139130">
    <property type="protein sequence ID" value="BAE23896.1"/>
    <property type="status" value="ALT_INIT"/>
    <property type="molecule type" value="mRNA"/>
</dbReference>
<dbReference type="EMBL" id="AK147220">
    <property type="protein sequence ID" value="BAE27775.1"/>
    <property type="molecule type" value="mRNA"/>
</dbReference>
<dbReference type="EMBL" id="AK147328">
    <property type="protein sequence ID" value="BAE27850.1"/>
    <property type="molecule type" value="mRNA"/>
</dbReference>
<dbReference type="EMBL" id="AK151929">
    <property type="protein sequence ID" value="BAE30805.1"/>
    <property type="molecule type" value="mRNA"/>
</dbReference>
<dbReference type="EMBL" id="AK160008">
    <property type="protein sequence ID" value="BAE35556.1"/>
    <property type="molecule type" value="mRNA"/>
</dbReference>
<dbReference type="EMBL" id="BC043696">
    <property type="protein sequence ID" value="AAH43696.1"/>
    <property type="molecule type" value="mRNA"/>
</dbReference>
<dbReference type="EMBL" id="BC055077">
    <property type="protein sequence ID" value="AAH55077.1"/>
    <property type="molecule type" value="mRNA"/>
</dbReference>
<dbReference type="CCDS" id="CCDS35555.1"/>
<dbReference type="PIR" id="I49607">
    <property type="entry name" value="I49607"/>
</dbReference>
<dbReference type="RefSeq" id="NP_031763.2">
    <property type="nucleotide sequence ID" value="NM_007737.2"/>
</dbReference>
<dbReference type="SMR" id="Q3U962"/>
<dbReference type="BioGRID" id="198822">
    <property type="interactions" value="8"/>
</dbReference>
<dbReference type="ComplexPortal" id="CPX-2962">
    <property type="entry name" value="Collagen type V trimer variant 1"/>
</dbReference>
<dbReference type="ComplexPortal" id="CPX-2963">
    <property type="entry name" value="Collagen type V trimer variant 2"/>
</dbReference>
<dbReference type="ComplexPortal" id="CPX-2976">
    <property type="entry name" value="Collagen type XI trimer variant 2"/>
</dbReference>
<dbReference type="ComplexPortal" id="CPX-2977">
    <property type="entry name" value="Collagen type XI trimer variant 3"/>
</dbReference>
<dbReference type="FunCoup" id="Q3U962">
    <property type="interactions" value="147"/>
</dbReference>
<dbReference type="STRING" id="10090.ENSMUSP00000083620"/>
<dbReference type="GlyCosmos" id="Q3U962">
    <property type="glycosylation" value="2 sites, No reported glycans"/>
</dbReference>
<dbReference type="GlyGen" id="Q3U962">
    <property type="glycosylation" value="15 sites, 1 N-linked glycan (1 site)"/>
</dbReference>
<dbReference type="iPTMnet" id="Q3U962"/>
<dbReference type="PhosphoSitePlus" id="Q3U962"/>
<dbReference type="CPTAC" id="non-CPTAC-4024"/>
<dbReference type="jPOST" id="Q3U962"/>
<dbReference type="PaxDb" id="10090-ENSMUSP00000083620"/>
<dbReference type="PeptideAtlas" id="Q3U962"/>
<dbReference type="ProteomicsDB" id="283544"/>
<dbReference type="Pumba" id="Q3U962"/>
<dbReference type="Antibodypedia" id="34019">
    <property type="antibodies" value="163 antibodies from 28 providers"/>
</dbReference>
<dbReference type="DNASU" id="12832"/>
<dbReference type="Ensembl" id="ENSMUST00000086430.5">
    <property type="protein sequence ID" value="ENSMUSP00000083620.5"/>
    <property type="gene ID" value="ENSMUSG00000026042.17"/>
</dbReference>
<dbReference type="GeneID" id="12832"/>
<dbReference type="KEGG" id="mmu:12832"/>
<dbReference type="UCSC" id="uc007awr.1">
    <property type="organism name" value="mouse"/>
</dbReference>
<dbReference type="AGR" id="MGI:88458"/>
<dbReference type="CTD" id="1290"/>
<dbReference type="MGI" id="MGI:88458">
    <property type="gene designation" value="Col5a2"/>
</dbReference>
<dbReference type="VEuPathDB" id="HostDB:ENSMUSG00000026042"/>
<dbReference type="eggNOG" id="KOG3544">
    <property type="taxonomic scope" value="Eukaryota"/>
</dbReference>
<dbReference type="GeneTree" id="ENSGT00940000155675"/>
<dbReference type="HOGENOM" id="CLU_001074_2_3_1"/>
<dbReference type="InParanoid" id="Q3U962"/>
<dbReference type="OMA" id="WWTSRSP"/>
<dbReference type="OrthoDB" id="8939548at2759"/>
<dbReference type="PhylomeDB" id="Q3U962"/>
<dbReference type="TreeFam" id="TF344135"/>
<dbReference type="Reactome" id="R-MMU-1442490">
    <property type="pathway name" value="Collagen degradation"/>
</dbReference>
<dbReference type="Reactome" id="R-MMU-1474244">
    <property type="pathway name" value="Extracellular matrix organization"/>
</dbReference>
<dbReference type="Reactome" id="R-MMU-1650814">
    <property type="pathway name" value="Collagen biosynthesis and modifying enzymes"/>
</dbReference>
<dbReference type="Reactome" id="R-MMU-186797">
    <property type="pathway name" value="Signaling by PDGF"/>
</dbReference>
<dbReference type="Reactome" id="R-MMU-2022090">
    <property type="pathway name" value="Assembly of collagen fibrils and other multimeric structures"/>
</dbReference>
<dbReference type="Reactome" id="R-MMU-216083">
    <property type="pathway name" value="Integrin cell surface interactions"/>
</dbReference>
<dbReference type="Reactome" id="R-MMU-3000171">
    <property type="pathway name" value="Non-integrin membrane-ECM interactions"/>
</dbReference>
<dbReference type="Reactome" id="R-MMU-3000178">
    <property type="pathway name" value="ECM proteoglycans"/>
</dbReference>
<dbReference type="Reactome" id="R-MMU-419037">
    <property type="pathway name" value="NCAM1 interactions"/>
</dbReference>
<dbReference type="Reactome" id="R-MMU-8874081">
    <property type="pathway name" value="MET activates PTK2 signaling"/>
</dbReference>
<dbReference type="Reactome" id="R-MMU-8948216">
    <property type="pathway name" value="Collagen chain trimerization"/>
</dbReference>
<dbReference type="BioGRID-ORCS" id="12832">
    <property type="hits" value="1 hit in 81 CRISPR screens"/>
</dbReference>
<dbReference type="ChiTaRS" id="Col5a2">
    <property type="organism name" value="mouse"/>
</dbReference>
<dbReference type="PRO" id="PR:Q3U962"/>
<dbReference type="Proteomes" id="UP000000589">
    <property type="component" value="Chromosome 1"/>
</dbReference>
<dbReference type="RNAct" id="Q3U962">
    <property type="molecule type" value="protein"/>
</dbReference>
<dbReference type="Bgee" id="ENSMUSG00000026042">
    <property type="expression patterns" value="Expressed in vault of skull and 257 other cell types or tissues"/>
</dbReference>
<dbReference type="GO" id="GO:0005581">
    <property type="term" value="C:collagen trimer"/>
    <property type="evidence" value="ECO:0000314"/>
    <property type="project" value="MGI"/>
</dbReference>
<dbReference type="GO" id="GO:0005588">
    <property type="term" value="C:collagen type V trimer"/>
    <property type="evidence" value="ECO:0007669"/>
    <property type="project" value="Ensembl"/>
</dbReference>
<dbReference type="GO" id="GO:0005592">
    <property type="term" value="C:collagen type XI trimer"/>
    <property type="evidence" value="ECO:0000303"/>
    <property type="project" value="ComplexPortal"/>
</dbReference>
<dbReference type="GO" id="GO:0062023">
    <property type="term" value="C:collagen-containing extracellular matrix"/>
    <property type="evidence" value="ECO:0007005"/>
    <property type="project" value="UniProtKB"/>
</dbReference>
<dbReference type="GO" id="GO:0005615">
    <property type="term" value="C:extracellular space"/>
    <property type="evidence" value="ECO:0007005"/>
    <property type="project" value="BHF-UCL"/>
</dbReference>
<dbReference type="GO" id="GO:0005201">
    <property type="term" value="F:extracellular matrix structural constituent"/>
    <property type="evidence" value="ECO:0007669"/>
    <property type="project" value="InterPro"/>
</dbReference>
<dbReference type="GO" id="GO:0046872">
    <property type="term" value="F:metal ion binding"/>
    <property type="evidence" value="ECO:0007669"/>
    <property type="project" value="UniProtKB-KW"/>
</dbReference>
<dbReference type="GO" id="GO:0046332">
    <property type="term" value="F:SMAD binding"/>
    <property type="evidence" value="ECO:0000353"/>
    <property type="project" value="MGI"/>
</dbReference>
<dbReference type="GO" id="GO:0071230">
    <property type="term" value="P:cellular response to amino acid stimulus"/>
    <property type="evidence" value="ECO:0000314"/>
    <property type="project" value="MGI"/>
</dbReference>
<dbReference type="GO" id="GO:0030199">
    <property type="term" value="P:collagen fibril organization"/>
    <property type="evidence" value="ECO:0000315"/>
    <property type="project" value="UniProtKB"/>
</dbReference>
<dbReference type="GO" id="GO:0048592">
    <property type="term" value="P:eye morphogenesis"/>
    <property type="evidence" value="ECO:0007669"/>
    <property type="project" value="Ensembl"/>
</dbReference>
<dbReference type="GO" id="GO:1903225">
    <property type="term" value="P:negative regulation of endodermal cell differentiation"/>
    <property type="evidence" value="ECO:0007669"/>
    <property type="project" value="Ensembl"/>
</dbReference>
<dbReference type="GO" id="GO:0001501">
    <property type="term" value="P:skeletal system development"/>
    <property type="evidence" value="ECO:0000315"/>
    <property type="project" value="MGI"/>
</dbReference>
<dbReference type="GO" id="GO:0043588">
    <property type="term" value="P:skin development"/>
    <property type="evidence" value="ECO:0000315"/>
    <property type="project" value="UniProtKB"/>
</dbReference>
<dbReference type="FunFam" id="2.60.120.1000:FF:000001">
    <property type="entry name" value="Collagen alpha-1 type I chain"/>
    <property type="match status" value="1"/>
</dbReference>
<dbReference type="FunFam" id="2.10.70.10:FF:000013">
    <property type="entry name" value="Collagen, type I, alpha 1"/>
    <property type="match status" value="1"/>
</dbReference>
<dbReference type="Gene3D" id="2.60.120.1000">
    <property type="match status" value="1"/>
</dbReference>
<dbReference type="Gene3D" id="6.20.200.20">
    <property type="match status" value="1"/>
</dbReference>
<dbReference type="InterPro" id="IPR008160">
    <property type="entry name" value="Collagen"/>
</dbReference>
<dbReference type="InterPro" id="IPR050149">
    <property type="entry name" value="Collagen_superfamily"/>
</dbReference>
<dbReference type="InterPro" id="IPR000885">
    <property type="entry name" value="Fib_collagen_C"/>
</dbReference>
<dbReference type="InterPro" id="IPR001007">
    <property type="entry name" value="VWF_dom"/>
</dbReference>
<dbReference type="NCBIfam" id="NF040941">
    <property type="entry name" value="GGGWT_bact"/>
    <property type="match status" value="1"/>
</dbReference>
<dbReference type="PANTHER" id="PTHR24023">
    <property type="entry name" value="COLLAGEN ALPHA"/>
    <property type="match status" value="1"/>
</dbReference>
<dbReference type="PANTHER" id="PTHR24023:SF1109">
    <property type="entry name" value="COLLAGEN ALPHA-4(IV) CHAIN-LIKE"/>
    <property type="match status" value="1"/>
</dbReference>
<dbReference type="Pfam" id="PF01410">
    <property type="entry name" value="COLFI"/>
    <property type="match status" value="1"/>
</dbReference>
<dbReference type="Pfam" id="PF01391">
    <property type="entry name" value="Collagen"/>
    <property type="match status" value="6"/>
</dbReference>
<dbReference type="Pfam" id="PF00093">
    <property type="entry name" value="VWC"/>
    <property type="match status" value="1"/>
</dbReference>
<dbReference type="SMART" id="SM00038">
    <property type="entry name" value="COLFI"/>
    <property type="match status" value="1"/>
</dbReference>
<dbReference type="SMART" id="SM00214">
    <property type="entry name" value="VWC"/>
    <property type="match status" value="1"/>
</dbReference>
<dbReference type="SUPFAM" id="SSF57603">
    <property type="entry name" value="FnI-like domain"/>
    <property type="match status" value="1"/>
</dbReference>
<dbReference type="PROSITE" id="PS51461">
    <property type="entry name" value="NC1_FIB"/>
    <property type="match status" value="1"/>
</dbReference>
<dbReference type="PROSITE" id="PS01208">
    <property type="entry name" value="VWFC_1"/>
    <property type="match status" value="1"/>
</dbReference>
<dbReference type="PROSITE" id="PS50184">
    <property type="entry name" value="VWFC_2"/>
    <property type="match status" value="1"/>
</dbReference>